<proteinExistence type="inferred from homology"/>
<evidence type="ECO:0000255" key="1">
    <source>
        <dbReference type="HAMAP-Rule" id="MF_01849"/>
    </source>
</evidence>
<evidence type="ECO:0000255" key="2">
    <source>
        <dbReference type="PROSITE-ProRule" id="PRU01266"/>
    </source>
</evidence>
<organism>
    <name type="scientific">Bacillus licheniformis (strain ATCC 14580 / DSM 13 / JCM 2505 / CCUG 7422 / NBRC 12200 / NCIMB 9375 / NCTC 10341 / NRRL NRS-1264 / Gibson 46)</name>
    <dbReference type="NCBI Taxonomy" id="279010"/>
    <lineage>
        <taxon>Bacteria</taxon>
        <taxon>Bacillati</taxon>
        <taxon>Bacillota</taxon>
        <taxon>Bacilli</taxon>
        <taxon>Bacillales</taxon>
        <taxon>Bacillaceae</taxon>
        <taxon>Bacillus</taxon>
    </lineage>
</organism>
<comment type="function">
    <text evidence="1">Specifically methylates position 2 of adenine 2503 in 23S rRNA and position 2 of adenine 37 in tRNAs.</text>
</comment>
<comment type="catalytic activity">
    <reaction evidence="1">
        <text>adenosine(2503) in 23S rRNA + 2 reduced [2Fe-2S]-[ferredoxin] + 2 S-adenosyl-L-methionine = 2-methyladenosine(2503) in 23S rRNA + 5'-deoxyadenosine + L-methionine + 2 oxidized [2Fe-2S]-[ferredoxin] + S-adenosyl-L-homocysteine</text>
        <dbReference type="Rhea" id="RHEA:42916"/>
        <dbReference type="Rhea" id="RHEA-COMP:10000"/>
        <dbReference type="Rhea" id="RHEA-COMP:10001"/>
        <dbReference type="Rhea" id="RHEA-COMP:10152"/>
        <dbReference type="Rhea" id="RHEA-COMP:10282"/>
        <dbReference type="ChEBI" id="CHEBI:17319"/>
        <dbReference type="ChEBI" id="CHEBI:33737"/>
        <dbReference type="ChEBI" id="CHEBI:33738"/>
        <dbReference type="ChEBI" id="CHEBI:57844"/>
        <dbReference type="ChEBI" id="CHEBI:57856"/>
        <dbReference type="ChEBI" id="CHEBI:59789"/>
        <dbReference type="ChEBI" id="CHEBI:74411"/>
        <dbReference type="ChEBI" id="CHEBI:74497"/>
        <dbReference type="EC" id="2.1.1.192"/>
    </reaction>
</comment>
<comment type="catalytic activity">
    <reaction evidence="1">
        <text>adenosine(37) in tRNA + 2 reduced [2Fe-2S]-[ferredoxin] + 2 S-adenosyl-L-methionine = 2-methyladenosine(37) in tRNA + 5'-deoxyadenosine + L-methionine + 2 oxidized [2Fe-2S]-[ferredoxin] + S-adenosyl-L-homocysteine</text>
        <dbReference type="Rhea" id="RHEA:43332"/>
        <dbReference type="Rhea" id="RHEA-COMP:10000"/>
        <dbReference type="Rhea" id="RHEA-COMP:10001"/>
        <dbReference type="Rhea" id="RHEA-COMP:10162"/>
        <dbReference type="Rhea" id="RHEA-COMP:10485"/>
        <dbReference type="ChEBI" id="CHEBI:17319"/>
        <dbReference type="ChEBI" id="CHEBI:33737"/>
        <dbReference type="ChEBI" id="CHEBI:33738"/>
        <dbReference type="ChEBI" id="CHEBI:57844"/>
        <dbReference type="ChEBI" id="CHEBI:57856"/>
        <dbReference type="ChEBI" id="CHEBI:59789"/>
        <dbReference type="ChEBI" id="CHEBI:74411"/>
        <dbReference type="ChEBI" id="CHEBI:74497"/>
        <dbReference type="EC" id="2.1.1.192"/>
    </reaction>
</comment>
<comment type="cofactor">
    <cofactor evidence="1">
        <name>[4Fe-4S] cluster</name>
        <dbReference type="ChEBI" id="CHEBI:49883"/>
    </cofactor>
    <text evidence="1">Binds 1 [4Fe-4S] cluster. The cluster is coordinated with 3 cysteines and an exchangeable S-adenosyl-L-methionine.</text>
</comment>
<comment type="subcellular location">
    <subcellularLocation>
        <location evidence="1">Cytoplasm</location>
    </subcellularLocation>
</comment>
<comment type="miscellaneous">
    <text evidence="1">Reaction proceeds by a ping-pong mechanism involving intermediate methylation of a conserved cysteine residue.</text>
</comment>
<comment type="similarity">
    <text evidence="1">Belongs to the radical SAM superfamily. RlmN family.</text>
</comment>
<protein>
    <recommendedName>
        <fullName evidence="1">Probable dual-specificity RNA methyltransferase RlmN</fullName>
        <ecNumber evidence="1">2.1.1.192</ecNumber>
    </recommendedName>
    <alternativeName>
        <fullName evidence="1">23S rRNA (adenine(2503)-C(2))-methyltransferase</fullName>
    </alternativeName>
    <alternativeName>
        <fullName evidence="1">23S rRNA m2A2503 methyltransferase</fullName>
    </alternativeName>
    <alternativeName>
        <fullName evidence="1">Ribosomal RNA large subunit methyltransferase N</fullName>
    </alternativeName>
    <alternativeName>
        <fullName evidence="1">tRNA (adenine(37)-C(2))-methyltransferase</fullName>
    </alternativeName>
    <alternativeName>
        <fullName evidence="1">tRNA m2A37 methyltransferase</fullName>
    </alternativeName>
</protein>
<reference key="1">
    <citation type="journal article" date="2004" name="J. Mol. Microbiol. Biotechnol.">
        <title>The complete genome sequence of Bacillus licheniformis DSM13, an organism with great industrial potential.</title>
        <authorList>
            <person name="Veith B."/>
            <person name="Herzberg C."/>
            <person name="Steckel S."/>
            <person name="Feesche J."/>
            <person name="Maurer K.H."/>
            <person name="Ehrenreich P."/>
            <person name="Baeumer S."/>
            <person name="Henne A."/>
            <person name="Liesegang H."/>
            <person name="Merkl R."/>
            <person name="Ehrenreich A."/>
            <person name="Gottschalk G."/>
        </authorList>
    </citation>
    <scope>NUCLEOTIDE SEQUENCE [LARGE SCALE GENOMIC DNA]</scope>
    <source>
        <strain>ATCC 14580 / DSM 13 / JCM 2505 / CCUG 7422 / NBRC 12200 / NCIMB 9375 / NCTC 10341 / NRRL NRS-1264 / Gibson 46</strain>
    </source>
</reference>
<reference key="2">
    <citation type="journal article" date="2004" name="Genome Biol.">
        <title>Complete genome sequence of the industrial bacterium Bacillus licheniformis and comparisons with closely related Bacillus species.</title>
        <authorList>
            <person name="Rey M.W."/>
            <person name="Ramaiya P."/>
            <person name="Nelson B.A."/>
            <person name="Brody-Karpin S.D."/>
            <person name="Zaretsky E.J."/>
            <person name="Tang M."/>
            <person name="Lopez de Leon A."/>
            <person name="Xiang H."/>
            <person name="Gusti V."/>
            <person name="Clausen I.G."/>
            <person name="Olsen P.B."/>
            <person name="Rasmussen M.D."/>
            <person name="Andersen J.T."/>
            <person name="Joergensen P.L."/>
            <person name="Larsen T.S."/>
            <person name="Sorokin A."/>
            <person name="Bolotin A."/>
            <person name="Lapidus A."/>
            <person name="Galleron N."/>
            <person name="Ehrlich S.D."/>
            <person name="Berka R.M."/>
        </authorList>
    </citation>
    <scope>NUCLEOTIDE SEQUENCE [LARGE SCALE GENOMIC DNA]</scope>
    <source>
        <strain>ATCC 14580 / DSM 13 / JCM 2505 / CCUG 7422 / NBRC 12200 / NCIMB 9375 / NCTC 10341 / NRRL NRS-1264 / Gibson 46</strain>
    </source>
</reference>
<gene>
    <name evidence="1" type="primary">rlmN</name>
    <name type="ordered locus">BLi01796</name>
    <name type="ordered locus">BL02300</name>
</gene>
<sequence length="361" mass="41386">MESKQKVRKELRTERPSIYSFEIEELKSWLSENGEKPFRAAQIFEWLYEKRVTSFEKMTNLSKELRTKLNEHFVLTTLKTAVKQTSQDGTMKFLFELHDGYTIETVLMRHEYGNSVCVTTQVGCRIGCTFCASTLGGLKRNLEAGEIVAQVVKVQQALDETDERVSSIVIMGIGEPFDNFQEMLAFLKIVNHDKGLNIGARHITVSTSGIIPKIYEFADEKLQINFAISLHAPNTEIRSRLMPINRAYKLPDLMKAVDYYIKKTGRRVTFEYGLFGGVNDQVEHAEELAELLKGIKCHVNLIPVNYVPERDYVRTPKEQIFAFEKTLKSHGVNVTIRREQGHDIDAACGQLRAKERQEETR</sequence>
<accession>Q65JS3</accession>
<accession>Q62V78</accession>
<name>RLMN_BACLD</name>
<keyword id="KW-0004">4Fe-4S</keyword>
<keyword id="KW-0963">Cytoplasm</keyword>
<keyword id="KW-1015">Disulfide bond</keyword>
<keyword id="KW-0408">Iron</keyword>
<keyword id="KW-0411">Iron-sulfur</keyword>
<keyword id="KW-0479">Metal-binding</keyword>
<keyword id="KW-0489">Methyltransferase</keyword>
<keyword id="KW-1185">Reference proteome</keyword>
<keyword id="KW-0698">rRNA processing</keyword>
<keyword id="KW-0949">S-adenosyl-L-methionine</keyword>
<keyword id="KW-0808">Transferase</keyword>
<keyword id="KW-0819">tRNA processing</keyword>
<dbReference type="EC" id="2.1.1.192" evidence="1"/>
<dbReference type="EMBL" id="CP000002">
    <property type="protein sequence ID" value="AAU23331.1"/>
    <property type="molecule type" value="Genomic_DNA"/>
</dbReference>
<dbReference type="EMBL" id="AE017333">
    <property type="protein sequence ID" value="AAU40691.1"/>
    <property type="molecule type" value="Genomic_DNA"/>
</dbReference>
<dbReference type="RefSeq" id="WP_003181673.1">
    <property type="nucleotide sequence ID" value="NC_006322.1"/>
</dbReference>
<dbReference type="SMR" id="Q65JS3"/>
<dbReference type="STRING" id="279010.BL02300"/>
<dbReference type="GeneID" id="92861611"/>
<dbReference type="KEGG" id="bld:BLi01796"/>
<dbReference type="KEGG" id="bli:BL02300"/>
<dbReference type="eggNOG" id="COG0820">
    <property type="taxonomic scope" value="Bacteria"/>
</dbReference>
<dbReference type="HOGENOM" id="CLU_029101_0_1_9"/>
<dbReference type="Proteomes" id="UP000000606">
    <property type="component" value="Chromosome"/>
</dbReference>
<dbReference type="GO" id="GO:0005737">
    <property type="term" value="C:cytoplasm"/>
    <property type="evidence" value="ECO:0007669"/>
    <property type="project" value="UniProtKB-SubCell"/>
</dbReference>
<dbReference type="GO" id="GO:0051539">
    <property type="term" value="F:4 iron, 4 sulfur cluster binding"/>
    <property type="evidence" value="ECO:0007669"/>
    <property type="project" value="UniProtKB-UniRule"/>
</dbReference>
<dbReference type="GO" id="GO:0046872">
    <property type="term" value="F:metal ion binding"/>
    <property type="evidence" value="ECO:0007669"/>
    <property type="project" value="UniProtKB-KW"/>
</dbReference>
<dbReference type="GO" id="GO:0070040">
    <property type="term" value="F:rRNA (adenine(2503)-C2-)-methyltransferase activity"/>
    <property type="evidence" value="ECO:0007669"/>
    <property type="project" value="UniProtKB-UniRule"/>
</dbReference>
<dbReference type="GO" id="GO:0019843">
    <property type="term" value="F:rRNA binding"/>
    <property type="evidence" value="ECO:0007669"/>
    <property type="project" value="UniProtKB-UniRule"/>
</dbReference>
<dbReference type="GO" id="GO:0002935">
    <property type="term" value="F:tRNA (adenine(37)-C2)-methyltransferase activity"/>
    <property type="evidence" value="ECO:0007669"/>
    <property type="project" value="UniProtKB-UniRule"/>
</dbReference>
<dbReference type="GO" id="GO:0000049">
    <property type="term" value="F:tRNA binding"/>
    <property type="evidence" value="ECO:0007669"/>
    <property type="project" value="UniProtKB-UniRule"/>
</dbReference>
<dbReference type="GO" id="GO:0070475">
    <property type="term" value="P:rRNA base methylation"/>
    <property type="evidence" value="ECO:0007669"/>
    <property type="project" value="UniProtKB-UniRule"/>
</dbReference>
<dbReference type="GO" id="GO:0030488">
    <property type="term" value="P:tRNA methylation"/>
    <property type="evidence" value="ECO:0007669"/>
    <property type="project" value="UniProtKB-UniRule"/>
</dbReference>
<dbReference type="CDD" id="cd01335">
    <property type="entry name" value="Radical_SAM"/>
    <property type="match status" value="1"/>
</dbReference>
<dbReference type="FunFam" id="3.20.20.70:FF:000014">
    <property type="entry name" value="Probable dual-specificity RNA methyltransferase RlmN"/>
    <property type="match status" value="1"/>
</dbReference>
<dbReference type="Gene3D" id="1.10.150.530">
    <property type="match status" value="1"/>
</dbReference>
<dbReference type="Gene3D" id="3.20.20.70">
    <property type="entry name" value="Aldolase class I"/>
    <property type="match status" value="1"/>
</dbReference>
<dbReference type="HAMAP" id="MF_01849">
    <property type="entry name" value="RNA_methyltr_RlmN"/>
    <property type="match status" value="1"/>
</dbReference>
<dbReference type="InterPro" id="IPR013785">
    <property type="entry name" value="Aldolase_TIM"/>
</dbReference>
<dbReference type="InterPro" id="IPR040072">
    <property type="entry name" value="Methyltransferase_A"/>
</dbReference>
<dbReference type="InterPro" id="IPR048641">
    <property type="entry name" value="RlmN_N"/>
</dbReference>
<dbReference type="InterPro" id="IPR027492">
    <property type="entry name" value="RNA_MTrfase_RlmN"/>
</dbReference>
<dbReference type="InterPro" id="IPR004383">
    <property type="entry name" value="rRNA_lsu_MTrfase_RlmN/Cfr"/>
</dbReference>
<dbReference type="InterPro" id="IPR007197">
    <property type="entry name" value="rSAM"/>
</dbReference>
<dbReference type="NCBIfam" id="TIGR00048">
    <property type="entry name" value="rRNA_mod_RlmN"/>
    <property type="match status" value="1"/>
</dbReference>
<dbReference type="PANTHER" id="PTHR30544">
    <property type="entry name" value="23S RRNA METHYLTRANSFERASE"/>
    <property type="match status" value="1"/>
</dbReference>
<dbReference type="PANTHER" id="PTHR30544:SF5">
    <property type="entry name" value="RADICAL SAM CORE DOMAIN-CONTAINING PROTEIN"/>
    <property type="match status" value="1"/>
</dbReference>
<dbReference type="Pfam" id="PF04055">
    <property type="entry name" value="Radical_SAM"/>
    <property type="match status" value="1"/>
</dbReference>
<dbReference type="Pfam" id="PF21016">
    <property type="entry name" value="RlmN_N"/>
    <property type="match status" value="1"/>
</dbReference>
<dbReference type="PIRSF" id="PIRSF006004">
    <property type="entry name" value="CHP00048"/>
    <property type="match status" value="1"/>
</dbReference>
<dbReference type="SFLD" id="SFLDF00275">
    <property type="entry name" value="adenosine_C2_methyltransferase"/>
    <property type="match status" value="1"/>
</dbReference>
<dbReference type="SFLD" id="SFLDS00029">
    <property type="entry name" value="Radical_SAM"/>
    <property type="match status" value="1"/>
</dbReference>
<dbReference type="SUPFAM" id="SSF102114">
    <property type="entry name" value="Radical SAM enzymes"/>
    <property type="match status" value="1"/>
</dbReference>
<dbReference type="PROSITE" id="PS51918">
    <property type="entry name" value="RADICAL_SAM"/>
    <property type="match status" value="1"/>
</dbReference>
<feature type="chain" id="PRO_0000350035" description="Probable dual-specificity RNA methyltransferase RlmN">
    <location>
        <begin position="1"/>
        <end position="361"/>
    </location>
</feature>
<feature type="domain" description="Radical SAM core" evidence="2">
    <location>
        <begin position="110"/>
        <end position="343"/>
    </location>
</feature>
<feature type="active site" description="Proton acceptor" evidence="1">
    <location>
        <position position="104"/>
    </location>
</feature>
<feature type="active site" description="S-methylcysteine intermediate" evidence="1">
    <location>
        <position position="348"/>
    </location>
</feature>
<feature type="binding site" evidence="1">
    <location>
        <position position="124"/>
    </location>
    <ligand>
        <name>[4Fe-4S] cluster</name>
        <dbReference type="ChEBI" id="CHEBI:49883"/>
        <note>4Fe-4S-S-AdoMet</note>
    </ligand>
</feature>
<feature type="binding site" evidence="1">
    <location>
        <position position="128"/>
    </location>
    <ligand>
        <name>[4Fe-4S] cluster</name>
        <dbReference type="ChEBI" id="CHEBI:49883"/>
        <note>4Fe-4S-S-AdoMet</note>
    </ligand>
</feature>
<feature type="binding site" evidence="1">
    <location>
        <position position="131"/>
    </location>
    <ligand>
        <name>[4Fe-4S] cluster</name>
        <dbReference type="ChEBI" id="CHEBI:49883"/>
        <note>4Fe-4S-S-AdoMet</note>
    </ligand>
</feature>
<feature type="binding site" evidence="1">
    <location>
        <begin position="174"/>
        <end position="175"/>
    </location>
    <ligand>
        <name>S-adenosyl-L-methionine</name>
        <dbReference type="ChEBI" id="CHEBI:59789"/>
    </ligand>
</feature>
<feature type="binding site" evidence="1">
    <location>
        <position position="206"/>
    </location>
    <ligand>
        <name>S-adenosyl-L-methionine</name>
        <dbReference type="ChEBI" id="CHEBI:59789"/>
    </ligand>
</feature>
<feature type="binding site" evidence="1">
    <location>
        <begin position="229"/>
        <end position="231"/>
    </location>
    <ligand>
        <name>S-adenosyl-L-methionine</name>
        <dbReference type="ChEBI" id="CHEBI:59789"/>
    </ligand>
</feature>
<feature type="binding site" evidence="1">
    <location>
        <position position="305"/>
    </location>
    <ligand>
        <name>S-adenosyl-L-methionine</name>
        <dbReference type="ChEBI" id="CHEBI:59789"/>
    </ligand>
</feature>
<feature type="disulfide bond" description="(transient)" evidence="1">
    <location>
        <begin position="117"/>
        <end position="348"/>
    </location>
</feature>